<reference key="1">
    <citation type="journal article" date="2007" name="Genome Res.">
        <title>Genome characteristics of facultatively symbiotic Frankia sp. strains reflect host range and host plant biogeography.</title>
        <authorList>
            <person name="Normand P."/>
            <person name="Lapierre P."/>
            <person name="Tisa L.S."/>
            <person name="Gogarten J.P."/>
            <person name="Alloisio N."/>
            <person name="Bagnarol E."/>
            <person name="Bassi C.A."/>
            <person name="Berry A.M."/>
            <person name="Bickhart D.M."/>
            <person name="Choisne N."/>
            <person name="Couloux A."/>
            <person name="Cournoyer B."/>
            <person name="Cruveiller S."/>
            <person name="Daubin V."/>
            <person name="Demange N."/>
            <person name="Francino M.P."/>
            <person name="Goltsman E."/>
            <person name="Huang Y."/>
            <person name="Kopp O.R."/>
            <person name="Labarre L."/>
            <person name="Lapidus A."/>
            <person name="Lavire C."/>
            <person name="Marechal J."/>
            <person name="Martinez M."/>
            <person name="Mastronunzio J.E."/>
            <person name="Mullin B.C."/>
            <person name="Niemann J."/>
            <person name="Pujic P."/>
            <person name="Rawnsley T."/>
            <person name="Rouy Z."/>
            <person name="Schenowitz C."/>
            <person name="Sellstedt A."/>
            <person name="Tavares F."/>
            <person name="Tomkins J.P."/>
            <person name="Vallenet D."/>
            <person name="Valverde C."/>
            <person name="Wall L.G."/>
            <person name="Wang Y."/>
            <person name="Medigue C."/>
            <person name="Benson D.R."/>
        </authorList>
    </citation>
    <scope>NUCLEOTIDE SEQUENCE [LARGE SCALE GENOMIC DNA]</scope>
    <source>
        <strain>EAN1pec</strain>
    </source>
</reference>
<name>MIAB_PARS2</name>
<evidence type="ECO:0000255" key="1">
    <source>
        <dbReference type="HAMAP-Rule" id="MF_01864"/>
    </source>
</evidence>
<evidence type="ECO:0000255" key="2">
    <source>
        <dbReference type="PROSITE-ProRule" id="PRU01266"/>
    </source>
</evidence>
<evidence type="ECO:0000256" key="3">
    <source>
        <dbReference type="SAM" id="MobiDB-lite"/>
    </source>
</evidence>
<sequence>MSGRSYQVRTFGCQMNVHDSERLAGLLESAGYVPAPEGSDADVVVFNTCAVRENADNRLYGNLGHLYPAKKSNPAMQIAVGGCLAQKDRSVILDRAPWVDVVFGTHNIHRLPVLLERARHNSAAQVEIAEALEVFPSSLPARRASHHSAWVSISVGCDNTCTFCIVPSLRGGERDRRPGDVLAEVEALVAEGALEITLLGQNVNSYGRSLGDPGAFAKLLRACGRVEGLERVRFTSPHPRDFTDDVIEAMAQTPNVCPQLHMPLQSGSDVVLRRMRRSYRRERFLGIVERVRAAMPDAAITTDIIVGFPGETEADFADTLDVVRTARFAGAFTFKYSPRPGTPAAEMDGAVDPAVVSERYGRLASLQDEMSWAENRAQVGRRVEIVVAEGEGRKDSATGRLSGRARDGRLVHLLVTGPHAQEGLVRPGDVVETVVTRGAPHHLTADGPLLTHRRTRAGDAWAAGRAIAGDTPRPDRPAVSLGMPQLRPSAPAAR</sequence>
<proteinExistence type="inferred from homology"/>
<keyword id="KW-0004">4Fe-4S</keyword>
<keyword id="KW-0963">Cytoplasm</keyword>
<keyword id="KW-0408">Iron</keyword>
<keyword id="KW-0411">Iron-sulfur</keyword>
<keyword id="KW-0479">Metal-binding</keyword>
<keyword id="KW-0949">S-adenosyl-L-methionine</keyword>
<keyword id="KW-0808">Transferase</keyword>
<keyword id="KW-0819">tRNA processing</keyword>
<organism>
    <name type="scientific">Parafrankia sp. (strain EAN1pec)</name>
    <dbReference type="NCBI Taxonomy" id="298653"/>
    <lineage>
        <taxon>Bacteria</taxon>
        <taxon>Bacillati</taxon>
        <taxon>Actinomycetota</taxon>
        <taxon>Actinomycetes</taxon>
        <taxon>Frankiales</taxon>
        <taxon>Frankiaceae</taxon>
        <taxon>Parafrankia</taxon>
    </lineage>
</organism>
<protein>
    <recommendedName>
        <fullName evidence="1">tRNA-2-methylthio-N(6)-dimethylallyladenosine synthase</fullName>
        <ecNumber evidence="1">2.8.4.3</ecNumber>
    </recommendedName>
    <alternativeName>
        <fullName evidence="1">(Dimethylallyl)adenosine tRNA methylthiotransferase MiaB</fullName>
    </alternativeName>
    <alternativeName>
        <fullName evidence="1">tRNA-i(6)A37 methylthiotransferase</fullName>
    </alternativeName>
</protein>
<dbReference type="EC" id="2.8.4.3" evidence="1"/>
<dbReference type="EMBL" id="CP000820">
    <property type="protein sequence ID" value="ABW10680.1"/>
    <property type="molecule type" value="Genomic_DNA"/>
</dbReference>
<dbReference type="RefSeq" id="WP_020458855.1">
    <property type="nucleotide sequence ID" value="NC_009921.1"/>
</dbReference>
<dbReference type="SMR" id="A8L6J8"/>
<dbReference type="STRING" id="298653.Franean1_1226"/>
<dbReference type="KEGG" id="fre:Franean1_1226"/>
<dbReference type="eggNOG" id="COG0621">
    <property type="taxonomic scope" value="Bacteria"/>
</dbReference>
<dbReference type="HOGENOM" id="CLU_018697_2_2_11"/>
<dbReference type="GO" id="GO:0005829">
    <property type="term" value="C:cytosol"/>
    <property type="evidence" value="ECO:0007669"/>
    <property type="project" value="TreeGrafter"/>
</dbReference>
<dbReference type="GO" id="GO:0051539">
    <property type="term" value="F:4 iron, 4 sulfur cluster binding"/>
    <property type="evidence" value="ECO:0007669"/>
    <property type="project" value="UniProtKB-UniRule"/>
</dbReference>
<dbReference type="GO" id="GO:0046872">
    <property type="term" value="F:metal ion binding"/>
    <property type="evidence" value="ECO:0007669"/>
    <property type="project" value="UniProtKB-KW"/>
</dbReference>
<dbReference type="GO" id="GO:0035597">
    <property type="term" value="F:N6-isopentenyladenosine methylthiotransferase activity"/>
    <property type="evidence" value="ECO:0007669"/>
    <property type="project" value="TreeGrafter"/>
</dbReference>
<dbReference type="CDD" id="cd01335">
    <property type="entry name" value="Radical_SAM"/>
    <property type="match status" value="1"/>
</dbReference>
<dbReference type="FunFam" id="3.40.50.12160:FF:000003">
    <property type="entry name" value="CDK5 regulatory subunit-associated protein 1"/>
    <property type="match status" value="1"/>
</dbReference>
<dbReference type="FunFam" id="3.80.30.20:FF:000001">
    <property type="entry name" value="tRNA-2-methylthio-N(6)-dimethylallyladenosine synthase 2"/>
    <property type="match status" value="1"/>
</dbReference>
<dbReference type="Gene3D" id="3.40.50.12160">
    <property type="entry name" value="Methylthiotransferase, N-terminal domain"/>
    <property type="match status" value="1"/>
</dbReference>
<dbReference type="Gene3D" id="3.80.30.20">
    <property type="entry name" value="tm_1862 like domain"/>
    <property type="match status" value="1"/>
</dbReference>
<dbReference type="HAMAP" id="MF_01864">
    <property type="entry name" value="tRNA_metthiotr_MiaB"/>
    <property type="match status" value="1"/>
</dbReference>
<dbReference type="InterPro" id="IPR006638">
    <property type="entry name" value="Elp3/MiaA/NifB-like_rSAM"/>
</dbReference>
<dbReference type="InterPro" id="IPR005839">
    <property type="entry name" value="Methylthiotransferase"/>
</dbReference>
<dbReference type="InterPro" id="IPR020612">
    <property type="entry name" value="Methylthiotransferase_CS"/>
</dbReference>
<dbReference type="InterPro" id="IPR013848">
    <property type="entry name" value="Methylthiotransferase_N"/>
</dbReference>
<dbReference type="InterPro" id="IPR038135">
    <property type="entry name" value="Methylthiotransferase_N_sf"/>
</dbReference>
<dbReference type="InterPro" id="IPR006463">
    <property type="entry name" value="MiaB_methiolase"/>
</dbReference>
<dbReference type="InterPro" id="IPR007197">
    <property type="entry name" value="rSAM"/>
</dbReference>
<dbReference type="InterPro" id="IPR023404">
    <property type="entry name" value="rSAM_horseshoe"/>
</dbReference>
<dbReference type="InterPro" id="IPR002792">
    <property type="entry name" value="TRAM_dom"/>
</dbReference>
<dbReference type="NCBIfam" id="TIGR01574">
    <property type="entry name" value="miaB-methiolase"/>
    <property type="match status" value="1"/>
</dbReference>
<dbReference type="NCBIfam" id="TIGR00089">
    <property type="entry name" value="MiaB/RimO family radical SAM methylthiotransferase"/>
    <property type="match status" value="1"/>
</dbReference>
<dbReference type="PANTHER" id="PTHR43020">
    <property type="entry name" value="CDK5 REGULATORY SUBUNIT-ASSOCIATED PROTEIN 1"/>
    <property type="match status" value="1"/>
</dbReference>
<dbReference type="PANTHER" id="PTHR43020:SF2">
    <property type="entry name" value="MITOCHONDRIAL TRNA METHYLTHIOTRANSFERASE CDK5RAP1"/>
    <property type="match status" value="1"/>
</dbReference>
<dbReference type="Pfam" id="PF04055">
    <property type="entry name" value="Radical_SAM"/>
    <property type="match status" value="1"/>
</dbReference>
<dbReference type="Pfam" id="PF00919">
    <property type="entry name" value="UPF0004"/>
    <property type="match status" value="1"/>
</dbReference>
<dbReference type="SFLD" id="SFLDF00273">
    <property type="entry name" value="(dimethylallyl)adenosine_tRNA"/>
    <property type="match status" value="1"/>
</dbReference>
<dbReference type="SFLD" id="SFLDG01082">
    <property type="entry name" value="B12-binding_domain_containing"/>
    <property type="match status" value="1"/>
</dbReference>
<dbReference type="SFLD" id="SFLDG01061">
    <property type="entry name" value="methylthiotransferase"/>
    <property type="match status" value="1"/>
</dbReference>
<dbReference type="SMART" id="SM00729">
    <property type="entry name" value="Elp3"/>
    <property type="match status" value="1"/>
</dbReference>
<dbReference type="SUPFAM" id="SSF102114">
    <property type="entry name" value="Radical SAM enzymes"/>
    <property type="match status" value="1"/>
</dbReference>
<dbReference type="PROSITE" id="PS51449">
    <property type="entry name" value="MTTASE_N"/>
    <property type="match status" value="1"/>
</dbReference>
<dbReference type="PROSITE" id="PS01278">
    <property type="entry name" value="MTTASE_RADICAL"/>
    <property type="match status" value="1"/>
</dbReference>
<dbReference type="PROSITE" id="PS51918">
    <property type="entry name" value="RADICAL_SAM"/>
    <property type="match status" value="1"/>
</dbReference>
<dbReference type="PROSITE" id="PS50926">
    <property type="entry name" value="TRAM"/>
    <property type="match status" value="1"/>
</dbReference>
<feature type="chain" id="PRO_0000374313" description="tRNA-2-methylthio-N(6)-dimethylallyladenosine synthase">
    <location>
        <begin position="1"/>
        <end position="494"/>
    </location>
</feature>
<feature type="domain" description="MTTase N-terminal" evidence="1">
    <location>
        <begin position="4"/>
        <end position="120"/>
    </location>
</feature>
<feature type="domain" description="Radical SAM core" evidence="2">
    <location>
        <begin position="143"/>
        <end position="374"/>
    </location>
</feature>
<feature type="domain" description="TRAM" evidence="1">
    <location>
        <begin position="376"/>
        <end position="449"/>
    </location>
</feature>
<feature type="region of interest" description="Disordered" evidence="3">
    <location>
        <begin position="465"/>
        <end position="494"/>
    </location>
</feature>
<feature type="binding site" evidence="1">
    <location>
        <position position="13"/>
    </location>
    <ligand>
        <name>[4Fe-4S] cluster</name>
        <dbReference type="ChEBI" id="CHEBI:49883"/>
        <label>1</label>
    </ligand>
</feature>
<feature type="binding site" evidence="1">
    <location>
        <position position="49"/>
    </location>
    <ligand>
        <name>[4Fe-4S] cluster</name>
        <dbReference type="ChEBI" id="CHEBI:49883"/>
        <label>1</label>
    </ligand>
</feature>
<feature type="binding site" evidence="1">
    <location>
        <position position="83"/>
    </location>
    <ligand>
        <name>[4Fe-4S] cluster</name>
        <dbReference type="ChEBI" id="CHEBI:49883"/>
        <label>1</label>
    </ligand>
</feature>
<feature type="binding site" evidence="1">
    <location>
        <position position="157"/>
    </location>
    <ligand>
        <name>[4Fe-4S] cluster</name>
        <dbReference type="ChEBI" id="CHEBI:49883"/>
        <label>2</label>
        <note>4Fe-4S-S-AdoMet</note>
    </ligand>
</feature>
<feature type="binding site" evidence="1">
    <location>
        <position position="161"/>
    </location>
    <ligand>
        <name>[4Fe-4S] cluster</name>
        <dbReference type="ChEBI" id="CHEBI:49883"/>
        <label>2</label>
        <note>4Fe-4S-S-AdoMet</note>
    </ligand>
</feature>
<feature type="binding site" evidence="1">
    <location>
        <position position="164"/>
    </location>
    <ligand>
        <name>[4Fe-4S] cluster</name>
        <dbReference type="ChEBI" id="CHEBI:49883"/>
        <label>2</label>
        <note>4Fe-4S-S-AdoMet</note>
    </ligand>
</feature>
<gene>
    <name evidence="1" type="primary">miaB</name>
    <name type="ordered locus">Franean1_1226</name>
</gene>
<accession>A8L6J8</accession>
<comment type="function">
    <text evidence="1">Catalyzes the methylthiolation of N6-(dimethylallyl)adenosine (i(6)A), leading to the formation of 2-methylthio-N6-(dimethylallyl)adenosine (ms(2)i(6)A) at position 37 in tRNAs that read codons beginning with uridine.</text>
</comment>
<comment type="catalytic activity">
    <reaction evidence="1">
        <text>N(6)-dimethylallyladenosine(37) in tRNA + (sulfur carrier)-SH + AH2 + 2 S-adenosyl-L-methionine = 2-methylsulfanyl-N(6)-dimethylallyladenosine(37) in tRNA + (sulfur carrier)-H + 5'-deoxyadenosine + L-methionine + A + S-adenosyl-L-homocysteine + 2 H(+)</text>
        <dbReference type="Rhea" id="RHEA:37067"/>
        <dbReference type="Rhea" id="RHEA-COMP:10375"/>
        <dbReference type="Rhea" id="RHEA-COMP:10376"/>
        <dbReference type="Rhea" id="RHEA-COMP:14737"/>
        <dbReference type="Rhea" id="RHEA-COMP:14739"/>
        <dbReference type="ChEBI" id="CHEBI:13193"/>
        <dbReference type="ChEBI" id="CHEBI:15378"/>
        <dbReference type="ChEBI" id="CHEBI:17319"/>
        <dbReference type="ChEBI" id="CHEBI:17499"/>
        <dbReference type="ChEBI" id="CHEBI:29917"/>
        <dbReference type="ChEBI" id="CHEBI:57844"/>
        <dbReference type="ChEBI" id="CHEBI:57856"/>
        <dbReference type="ChEBI" id="CHEBI:59789"/>
        <dbReference type="ChEBI" id="CHEBI:64428"/>
        <dbReference type="ChEBI" id="CHEBI:74415"/>
        <dbReference type="ChEBI" id="CHEBI:74417"/>
        <dbReference type="EC" id="2.8.4.3"/>
    </reaction>
</comment>
<comment type="cofactor">
    <cofactor evidence="1">
        <name>[4Fe-4S] cluster</name>
        <dbReference type="ChEBI" id="CHEBI:49883"/>
    </cofactor>
    <text evidence="1">Binds 2 [4Fe-4S] clusters. One cluster is coordinated with 3 cysteines and an exchangeable S-adenosyl-L-methionine.</text>
</comment>
<comment type="subunit">
    <text evidence="1">Monomer.</text>
</comment>
<comment type="subcellular location">
    <subcellularLocation>
        <location evidence="1">Cytoplasm</location>
    </subcellularLocation>
</comment>
<comment type="similarity">
    <text evidence="1">Belongs to the methylthiotransferase family. MiaB subfamily.</text>
</comment>